<reference key="1">
    <citation type="submission" date="2007-02" db="EMBL/GenBank/DDBJ databases">
        <title>Complete sequence of chromosome of Shewanella baltica OS155.</title>
        <authorList>
            <consortium name="US DOE Joint Genome Institute"/>
            <person name="Copeland A."/>
            <person name="Lucas S."/>
            <person name="Lapidus A."/>
            <person name="Barry K."/>
            <person name="Detter J.C."/>
            <person name="Glavina del Rio T."/>
            <person name="Hammon N."/>
            <person name="Israni S."/>
            <person name="Dalin E."/>
            <person name="Tice H."/>
            <person name="Pitluck S."/>
            <person name="Sims D.R."/>
            <person name="Brettin T."/>
            <person name="Bruce D."/>
            <person name="Han C."/>
            <person name="Tapia R."/>
            <person name="Brainard J."/>
            <person name="Schmutz J."/>
            <person name="Larimer F."/>
            <person name="Land M."/>
            <person name="Hauser L."/>
            <person name="Kyrpides N."/>
            <person name="Mikhailova N."/>
            <person name="Brettar I."/>
            <person name="Klappenbach J."/>
            <person name="Konstantinidis K."/>
            <person name="Rodrigues J."/>
            <person name="Tiedje J."/>
            <person name="Richardson P."/>
        </authorList>
    </citation>
    <scope>NUCLEOTIDE SEQUENCE [LARGE SCALE GENOMIC DNA]</scope>
    <source>
        <strain>OS155 / ATCC BAA-1091</strain>
    </source>
</reference>
<protein>
    <recommendedName>
        <fullName evidence="1">Large ribosomal subunit protein uL16</fullName>
    </recommendedName>
    <alternativeName>
        <fullName evidence="2">50S ribosomal protein L16</fullName>
    </alternativeName>
</protein>
<comment type="function">
    <text evidence="1">Binds 23S rRNA and is also seen to make contacts with the A and possibly P site tRNAs.</text>
</comment>
<comment type="subunit">
    <text evidence="1">Part of the 50S ribosomal subunit.</text>
</comment>
<comment type="similarity">
    <text evidence="1">Belongs to the universal ribosomal protein uL16 family.</text>
</comment>
<accession>A3DA65</accession>
<evidence type="ECO:0000255" key="1">
    <source>
        <dbReference type="HAMAP-Rule" id="MF_01342"/>
    </source>
</evidence>
<evidence type="ECO:0000305" key="2"/>
<organism>
    <name type="scientific">Shewanella baltica (strain OS155 / ATCC BAA-1091)</name>
    <dbReference type="NCBI Taxonomy" id="325240"/>
    <lineage>
        <taxon>Bacteria</taxon>
        <taxon>Pseudomonadati</taxon>
        <taxon>Pseudomonadota</taxon>
        <taxon>Gammaproteobacteria</taxon>
        <taxon>Alteromonadales</taxon>
        <taxon>Shewanellaceae</taxon>
        <taxon>Shewanella</taxon>
    </lineage>
</organism>
<gene>
    <name evidence="1" type="primary">rplP</name>
    <name type="ordered locus">Sbal_4163</name>
</gene>
<proteinExistence type="inferred from homology"/>
<dbReference type="EMBL" id="CP000563">
    <property type="protein sequence ID" value="ABN63628.1"/>
    <property type="molecule type" value="Genomic_DNA"/>
</dbReference>
<dbReference type="RefSeq" id="WP_006083593.1">
    <property type="nucleotide sequence ID" value="NC_009052.1"/>
</dbReference>
<dbReference type="SMR" id="A3DA65"/>
<dbReference type="STRING" id="325240.Sbal_4163"/>
<dbReference type="GeneID" id="94726193"/>
<dbReference type="KEGG" id="sbl:Sbal_4163"/>
<dbReference type="HOGENOM" id="CLU_078858_2_1_6"/>
<dbReference type="OrthoDB" id="9802589at2"/>
<dbReference type="Proteomes" id="UP000001557">
    <property type="component" value="Chromosome"/>
</dbReference>
<dbReference type="GO" id="GO:0022625">
    <property type="term" value="C:cytosolic large ribosomal subunit"/>
    <property type="evidence" value="ECO:0007669"/>
    <property type="project" value="TreeGrafter"/>
</dbReference>
<dbReference type="GO" id="GO:0019843">
    <property type="term" value="F:rRNA binding"/>
    <property type="evidence" value="ECO:0007669"/>
    <property type="project" value="UniProtKB-UniRule"/>
</dbReference>
<dbReference type="GO" id="GO:0003735">
    <property type="term" value="F:structural constituent of ribosome"/>
    <property type="evidence" value="ECO:0007669"/>
    <property type="project" value="InterPro"/>
</dbReference>
<dbReference type="GO" id="GO:0000049">
    <property type="term" value="F:tRNA binding"/>
    <property type="evidence" value="ECO:0007669"/>
    <property type="project" value="UniProtKB-KW"/>
</dbReference>
<dbReference type="GO" id="GO:0006412">
    <property type="term" value="P:translation"/>
    <property type="evidence" value="ECO:0007669"/>
    <property type="project" value="UniProtKB-UniRule"/>
</dbReference>
<dbReference type="CDD" id="cd01433">
    <property type="entry name" value="Ribosomal_L16_L10e"/>
    <property type="match status" value="1"/>
</dbReference>
<dbReference type="FunFam" id="3.90.1170.10:FF:000001">
    <property type="entry name" value="50S ribosomal protein L16"/>
    <property type="match status" value="1"/>
</dbReference>
<dbReference type="Gene3D" id="3.90.1170.10">
    <property type="entry name" value="Ribosomal protein L10e/L16"/>
    <property type="match status" value="1"/>
</dbReference>
<dbReference type="HAMAP" id="MF_01342">
    <property type="entry name" value="Ribosomal_uL16"/>
    <property type="match status" value="1"/>
</dbReference>
<dbReference type="InterPro" id="IPR047873">
    <property type="entry name" value="Ribosomal_uL16"/>
</dbReference>
<dbReference type="InterPro" id="IPR000114">
    <property type="entry name" value="Ribosomal_uL16_bact-type"/>
</dbReference>
<dbReference type="InterPro" id="IPR020798">
    <property type="entry name" value="Ribosomal_uL16_CS"/>
</dbReference>
<dbReference type="InterPro" id="IPR016180">
    <property type="entry name" value="Ribosomal_uL16_dom"/>
</dbReference>
<dbReference type="InterPro" id="IPR036920">
    <property type="entry name" value="Ribosomal_uL16_sf"/>
</dbReference>
<dbReference type="NCBIfam" id="TIGR01164">
    <property type="entry name" value="rplP_bact"/>
    <property type="match status" value="1"/>
</dbReference>
<dbReference type="PANTHER" id="PTHR12220">
    <property type="entry name" value="50S/60S RIBOSOMAL PROTEIN L16"/>
    <property type="match status" value="1"/>
</dbReference>
<dbReference type="PANTHER" id="PTHR12220:SF13">
    <property type="entry name" value="LARGE RIBOSOMAL SUBUNIT PROTEIN UL16M"/>
    <property type="match status" value="1"/>
</dbReference>
<dbReference type="Pfam" id="PF00252">
    <property type="entry name" value="Ribosomal_L16"/>
    <property type="match status" value="1"/>
</dbReference>
<dbReference type="PRINTS" id="PR00060">
    <property type="entry name" value="RIBOSOMALL16"/>
</dbReference>
<dbReference type="SUPFAM" id="SSF54686">
    <property type="entry name" value="Ribosomal protein L16p/L10e"/>
    <property type="match status" value="1"/>
</dbReference>
<dbReference type="PROSITE" id="PS00586">
    <property type="entry name" value="RIBOSOMAL_L16_1"/>
    <property type="match status" value="1"/>
</dbReference>
<dbReference type="PROSITE" id="PS00701">
    <property type="entry name" value="RIBOSOMAL_L16_2"/>
    <property type="match status" value="1"/>
</dbReference>
<keyword id="KW-1185">Reference proteome</keyword>
<keyword id="KW-0687">Ribonucleoprotein</keyword>
<keyword id="KW-0689">Ribosomal protein</keyword>
<keyword id="KW-0694">RNA-binding</keyword>
<keyword id="KW-0699">rRNA-binding</keyword>
<keyword id="KW-0820">tRNA-binding</keyword>
<name>RL16_SHEB5</name>
<sequence length="136" mass="15396">MLQPKRMKFRKMFKGRNRGLANGTEVSFGTFGLKAVGRGRLTARQIESARRAMTRHIKRQGQIWIRVFPDKPITSKPLEVRMGKGKGNVEYWVCQIQPGKVLYEMNGVSEVIAREAFALAAAKLPIKTTFVTKTVM</sequence>
<feature type="chain" id="PRO_1000054699" description="Large ribosomal subunit protein uL16">
    <location>
        <begin position="1"/>
        <end position="136"/>
    </location>
</feature>